<organism>
    <name type="scientific">Lacticaseibacillus paracasei (strain ATCC 334 / BCRC 17002 / CCUG 31169 / CIP 107868 / KCTC 3260 / NRRL B-441)</name>
    <name type="common">Lactobacillus paracasei</name>
    <dbReference type="NCBI Taxonomy" id="321967"/>
    <lineage>
        <taxon>Bacteria</taxon>
        <taxon>Bacillati</taxon>
        <taxon>Bacillota</taxon>
        <taxon>Bacilli</taxon>
        <taxon>Lactobacillales</taxon>
        <taxon>Lactobacillaceae</taxon>
        <taxon>Lacticaseibacillus</taxon>
    </lineage>
</organism>
<protein>
    <recommendedName>
        <fullName evidence="1">Exodeoxyribonuclease 7 large subunit</fullName>
        <ecNumber evidence="1">3.1.11.6</ecNumber>
    </recommendedName>
    <alternativeName>
        <fullName evidence="1">Exodeoxyribonuclease VII large subunit</fullName>
        <shortName evidence="1">Exonuclease VII large subunit</shortName>
    </alternativeName>
</protein>
<reference key="1">
    <citation type="journal article" date="2006" name="Proc. Natl. Acad. Sci. U.S.A.">
        <title>Comparative genomics of the lactic acid bacteria.</title>
        <authorList>
            <person name="Makarova K.S."/>
            <person name="Slesarev A."/>
            <person name="Wolf Y.I."/>
            <person name="Sorokin A."/>
            <person name="Mirkin B."/>
            <person name="Koonin E.V."/>
            <person name="Pavlov A."/>
            <person name="Pavlova N."/>
            <person name="Karamychev V."/>
            <person name="Polouchine N."/>
            <person name="Shakhova V."/>
            <person name="Grigoriev I."/>
            <person name="Lou Y."/>
            <person name="Rohksar D."/>
            <person name="Lucas S."/>
            <person name="Huang K."/>
            <person name="Goodstein D.M."/>
            <person name="Hawkins T."/>
            <person name="Plengvidhya V."/>
            <person name="Welker D."/>
            <person name="Hughes J."/>
            <person name="Goh Y."/>
            <person name="Benson A."/>
            <person name="Baldwin K."/>
            <person name="Lee J.-H."/>
            <person name="Diaz-Muniz I."/>
            <person name="Dosti B."/>
            <person name="Smeianov V."/>
            <person name="Wechter W."/>
            <person name="Barabote R."/>
            <person name="Lorca G."/>
            <person name="Altermann E."/>
            <person name="Barrangou R."/>
            <person name="Ganesan B."/>
            <person name="Xie Y."/>
            <person name="Rawsthorne H."/>
            <person name="Tamir D."/>
            <person name="Parker C."/>
            <person name="Breidt F."/>
            <person name="Broadbent J.R."/>
            <person name="Hutkins R."/>
            <person name="O'Sullivan D."/>
            <person name="Steele J."/>
            <person name="Unlu G."/>
            <person name="Saier M.H. Jr."/>
            <person name="Klaenhammer T."/>
            <person name="Richardson P."/>
            <person name="Kozyavkin S."/>
            <person name="Weimer B.C."/>
            <person name="Mills D.A."/>
        </authorList>
    </citation>
    <scope>NUCLEOTIDE SEQUENCE [LARGE SCALE GENOMIC DNA]</scope>
    <source>
        <strain>ATCC 334 / BCRC 17002 / CCUG 31169 / CIP 107868 / KCTC 3260 / NRRL B-441</strain>
    </source>
</reference>
<sequence length="449" mass="50319">MVDASQYLSVTALTQYLKRKFDADPYLAKVYLTGEISNYRKRVGNQYFSLKDDHAKIGALMFRNAFSKVQFDLEEGMKVLVVGRVSLYEPSGEYRLIVEHLEPDGVGALYQAFEQLKKKLAAEGLFDRNQRPLPLFPKRVAVVTSPSGAVIQDIMTTVARRYPILQLTLFPAVVQGDQAADSLVKRLNQIKTIGGFDAVIIGRGGGSIEDLWPFNEEKVARALVDMPMPVVSSVGHETDTTITDFIADRRAATPTAAAEIVTPVTLIDALNRISEDRVRLVNAMHNRLKNAAIRVQRSAQSVVLTQPDRLYDQYVQRVDQFQQRLQQSMHNRLRDADHRLAMATSQLDGRQLFIRLVNLQRQVTGDRHRLDQAMRGLVKTKRQAFASAVSGLDHLSPLKILGRGFAYVTDKQGQMLKSLSDYELDQDIHIHVADGQVGAHVTTKEKTHG</sequence>
<evidence type="ECO:0000255" key="1">
    <source>
        <dbReference type="HAMAP-Rule" id="MF_00378"/>
    </source>
</evidence>
<accession>Q038G0</accession>
<feature type="chain" id="PRO_0000303791" description="Exodeoxyribonuclease 7 large subunit">
    <location>
        <begin position="1"/>
        <end position="449"/>
    </location>
</feature>
<name>EX7L_LACP3</name>
<proteinExistence type="inferred from homology"/>
<comment type="function">
    <text evidence="1">Bidirectionally degrades single-stranded DNA into large acid-insoluble oligonucleotides, which are then degraded further into small acid-soluble oligonucleotides.</text>
</comment>
<comment type="catalytic activity">
    <reaction evidence="1">
        <text>Exonucleolytic cleavage in either 5'- to 3'- or 3'- to 5'-direction to yield nucleoside 5'-phosphates.</text>
        <dbReference type="EC" id="3.1.11.6"/>
    </reaction>
</comment>
<comment type="subunit">
    <text evidence="1">Heterooligomer composed of large and small subunits.</text>
</comment>
<comment type="subcellular location">
    <subcellularLocation>
        <location evidence="1">Cytoplasm</location>
    </subcellularLocation>
</comment>
<comment type="similarity">
    <text evidence="1">Belongs to the XseA family.</text>
</comment>
<dbReference type="EC" id="3.1.11.6" evidence="1"/>
<dbReference type="EMBL" id="CP000423">
    <property type="protein sequence ID" value="ABJ70412.1"/>
    <property type="molecule type" value="Genomic_DNA"/>
</dbReference>
<dbReference type="RefSeq" id="WP_003660684.1">
    <property type="nucleotide sequence ID" value="NC_008526.1"/>
</dbReference>
<dbReference type="RefSeq" id="YP_806854.1">
    <property type="nucleotide sequence ID" value="NC_008526.1"/>
</dbReference>
<dbReference type="SMR" id="Q038G0"/>
<dbReference type="STRING" id="321967.LSEI_1638"/>
<dbReference type="PaxDb" id="321967-LSEI_1638"/>
<dbReference type="KEGG" id="lca:LSEI_1638"/>
<dbReference type="PATRIC" id="fig|321967.11.peg.1619"/>
<dbReference type="HOGENOM" id="CLU_023625_3_1_9"/>
<dbReference type="Proteomes" id="UP000001651">
    <property type="component" value="Chromosome"/>
</dbReference>
<dbReference type="GO" id="GO:0005737">
    <property type="term" value="C:cytoplasm"/>
    <property type="evidence" value="ECO:0007669"/>
    <property type="project" value="UniProtKB-SubCell"/>
</dbReference>
<dbReference type="GO" id="GO:0009318">
    <property type="term" value="C:exodeoxyribonuclease VII complex"/>
    <property type="evidence" value="ECO:0007669"/>
    <property type="project" value="InterPro"/>
</dbReference>
<dbReference type="GO" id="GO:0008855">
    <property type="term" value="F:exodeoxyribonuclease VII activity"/>
    <property type="evidence" value="ECO:0007669"/>
    <property type="project" value="UniProtKB-UniRule"/>
</dbReference>
<dbReference type="GO" id="GO:0003676">
    <property type="term" value="F:nucleic acid binding"/>
    <property type="evidence" value="ECO:0007669"/>
    <property type="project" value="InterPro"/>
</dbReference>
<dbReference type="GO" id="GO:0006308">
    <property type="term" value="P:DNA catabolic process"/>
    <property type="evidence" value="ECO:0007669"/>
    <property type="project" value="UniProtKB-UniRule"/>
</dbReference>
<dbReference type="CDD" id="cd04489">
    <property type="entry name" value="ExoVII_LU_OBF"/>
    <property type="match status" value="1"/>
</dbReference>
<dbReference type="HAMAP" id="MF_00378">
    <property type="entry name" value="Exonuc_7_L"/>
    <property type="match status" value="1"/>
</dbReference>
<dbReference type="InterPro" id="IPR003753">
    <property type="entry name" value="Exonuc_VII_L"/>
</dbReference>
<dbReference type="InterPro" id="IPR020579">
    <property type="entry name" value="Exonuc_VII_lsu_C"/>
</dbReference>
<dbReference type="InterPro" id="IPR025824">
    <property type="entry name" value="OB-fold_nuc-bd_dom"/>
</dbReference>
<dbReference type="NCBIfam" id="TIGR00237">
    <property type="entry name" value="xseA"/>
    <property type="match status" value="1"/>
</dbReference>
<dbReference type="PANTHER" id="PTHR30008">
    <property type="entry name" value="EXODEOXYRIBONUCLEASE 7 LARGE SUBUNIT"/>
    <property type="match status" value="1"/>
</dbReference>
<dbReference type="PANTHER" id="PTHR30008:SF0">
    <property type="entry name" value="EXODEOXYRIBONUCLEASE 7 LARGE SUBUNIT"/>
    <property type="match status" value="1"/>
</dbReference>
<dbReference type="Pfam" id="PF02601">
    <property type="entry name" value="Exonuc_VII_L"/>
    <property type="match status" value="1"/>
</dbReference>
<dbReference type="Pfam" id="PF13742">
    <property type="entry name" value="tRNA_anti_2"/>
    <property type="match status" value="1"/>
</dbReference>
<keyword id="KW-0963">Cytoplasm</keyword>
<keyword id="KW-0269">Exonuclease</keyword>
<keyword id="KW-0378">Hydrolase</keyword>
<keyword id="KW-0540">Nuclease</keyword>
<keyword id="KW-1185">Reference proteome</keyword>
<gene>
    <name evidence="1" type="primary">xseA</name>
    <name type="ordered locus">LSEI_1638</name>
</gene>